<accession>C0R4K8</accession>
<proteinExistence type="inferred from homology"/>
<sequence>MAIEKTLSILKPDAVKNNITGKINSYIESSGLKIIAQKMMLLTKKQAELFYEIHKDRPFFGELVEFMTSGSVIVQVLVGENAVSKYRQIMGATNPKQADKGTIRGDFADDISENRVHGSDSLENARKEIAFFFAECELV</sequence>
<evidence type="ECO:0000255" key="1">
    <source>
        <dbReference type="HAMAP-Rule" id="MF_00451"/>
    </source>
</evidence>
<gene>
    <name evidence="1" type="primary">ndk</name>
    <name type="ordered locus">WRi_011560</name>
</gene>
<comment type="function">
    <text evidence="1">Major role in the synthesis of nucleoside triphosphates other than ATP. The ATP gamma phosphate is transferred to the NDP beta phosphate via a ping-pong mechanism, using a phosphorylated active-site intermediate.</text>
</comment>
<comment type="catalytic activity">
    <reaction evidence="1">
        <text>a 2'-deoxyribonucleoside 5'-diphosphate + ATP = a 2'-deoxyribonucleoside 5'-triphosphate + ADP</text>
        <dbReference type="Rhea" id="RHEA:44640"/>
        <dbReference type="ChEBI" id="CHEBI:30616"/>
        <dbReference type="ChEBI" id="CHEBI:61560"/>
        <dbReference type="ChEBI" id="CHEBI:73316"/>
        <dbReference type="ChEBI" id="CHEBI:456216"/>
        <dbReference type="EC" id="2.7.4.6"/>
    </reaction>
</comment>
<comment type="catalytic activity">
    <reaction evidence="1">
        <text>a ribonucleoside 5'-diphosphate + ATP = a ribonucleoside 5'-triphosphate + ADP</text>
        <dbReference type="Rhea" id="RHEA:18113"/>
        <dbReference type="ChEBI" id="CHEBI:30616"/>
        <dbReference type="ChEBI" id="CHEBI:57930"/>
        <dbReference type="ChEBI" id="CHEBI:61557"/>
        <dbReference type="ChEBI" id="CHEBI:456216"/>
        <dbReference type="EC" id="2.7.4.6"/>
    </reaction>
</comment>
<comment type="cofactor">
    <cofactor evidence="1">
        <name>Mg(2+)</name>
        <dbReference type="ChEBI" id="CHEBI:18420"/>
    </cofactor>
</comment>
<comment type="subunit">
    <text evidence="1">Homotetramer.</text>
</comment>
<comment type="subcellular location">
    <subcellularLocation>
        <location evidence="1">Cytoplasm</location>
    </subcellularLocation>
</comment>
<comment type="similarity">
    <text evidence="1">Belongs to the NDK family.</text>
</comment>
<feature type="chain" id="PRO_1000192302" description="Nucleoside diphosphate kinase">
    <location>
        <begin position="1"/>
        <end position="139"/>
    </location>
</feature>
<feature type="active site" description="Pros-phosphohistidine intermediate" evidence="1">
    <location>
        <position position="117"/>
    </location>
</feature>
<feature type="binding site" evidence="1">
    <location>
        <position position="11"/>
    </location>
    <ligand>
        <name>ATP</name>
        <dbReference type="ChEBI" id="CHEBI:30616"/>
    </ligand>
</feature>
<feature type="binding site" evidence="1">
    <location>
        <position position="59"/>
    </location>
    <ligand>
        <name>ATP</name>
        <dbReference type="ChEBI" id="CHEBI:30616"/>
    </ligand>
</feature>
<feature type="binding site" evidence="1">
    <location>
        <position position="87"/>
    </location>
    <ligand>
        <name>ATP</name>
        <dbReference type="ChEBI" id="CHEBI:30616"/>
    </ligand>
</feature>
<feature type="binding site" evidence="1">
    <location>
        <position position="93"/>
    </location>
    <ligand>
        <name>ATP</name>
        <dbReference type="ChEBI" id="CHEBI:30616"/>
    </ligand>
</feature>
<feature type="binding site" evidence="1">
    <location>
        <position position="104"/>
    </location>
    <ligand>
        <name>ATP</name>
        <dbReference type="ChEBI" id="CHEBI:30616"/>
    </ligand>
</feature>
<feature type="binding site" evidence="1">
    <location>
        <position position="114"/>
    </location>
    <ligand>
        <name>ATP</name>
        <dbReference type="ChEBI" id="CHEBI:30616"/>
    </ligand>
</feature>
<reference key="1">
    <citation type="journal article" date="2009" name="Proc. Natl. Acad. Sci. U.S.A.">
        <title>The mosaic genome structure of the Wolbachia wRi strain infecting Drosophila simulans.</title>
        <authorList>
            <person name="Klasson L."/>
            <person name="Westberg J."/>
            <person name="Sapountzis P."/>
            <person name="Naeslund K."/>
            <person name="Lutnaes Y."/>
            <person name="Darby A.C."/>
            <person name="Veneti Z."/>
            <person name="Chen L."/>
            <person name="Braig H.R."/>
            <person name="Garrett R."/>
            <person name="Bourtzis K."/>
            <person name="Andersson S.G."/>
        </authorList>
    </citation>
    <scope>NUCLEOTIDE SEQUENCE [LARGE SCALE GENOMIC DNA]</scope>
    <source>
        <strain>wRi</strain>
    </source>
</reference>
<name>NDK_WOLWR</name>
<keyword id="KW-0067">ATP-binding</keyword>
<keyword id="KW-0963">Cytoplasm</keyword>
<keyword id="KW-0418">Kinase</keyword>
<keyword id="KW-0460">Magnesium</keyword>
<keyword id="KW-0479">Metal-binding</keyword>
<keyword id="KW-0546">Nucleotide metabolism</keyword>
<keyword id="KW-0547">Nucleotide-binding</keyword>
<keyword id="KW-0597">Phosphoprotein</keyword>
<keyword id="KW-0808">Transferase</keyword>
<protein>
    <recommendedName>
        <fullName evidence="1">Nucleoside diphosphate kinase</fullName>
        <shortName evidence="1">NDK</shortName>
        <shortName evidence="1">NDP kinase</shortName>
        <ecNumber evidence="1">2.7.4.6</ecNumber>
    </recommendedName>
    <alternativeName>
        <fullName evidence="1">Nucleoside-2-P kinase</fullName>
    </alternativeName>
</protein>
<dbReference type="EC" id="2.7.4.6" evidence="1"/>
<dbReference type="EMBL" id="CP001391">
    <property type="protein sequence ID" value="ACN95850.1"/>
    <property type="molecule type" value="Genomic_DNA"/>
</dbReference>
<dbReference type="RefSeq" id="WP_007548917.1">
    <property type="nucleotide sequence ID" value="NZ_MKIF01000092.1"/>
</dbReference>
<dbReference type="SMR" id="C0R4K8"/>
<dbReference type="STRING" id="66084.WRi_011560"/>
<dbReference type="KEGG" id="wri:WRi_011560"/>
<dbReference type="HOGENOM" id="CLU_060216_8_1_5"/>
<dbReference type="Proteomes" id="UP000001293">
    <property type="component" value="Chromosome"/>
</dbReference>
<dbReference type="GO" id="GO:0005737">
    <property type="term" value="C:cytoplasm"/>
    <property type="evidence" value="ECO:0007669"/>
    <property type="project" value="UniProtKB-SubCell"/>
</dbReference>
<dbReference type="GO" id="GO:0005524">
    <property type="term" value="F:ATP binding"/>
    <property type="evidence" value="ECO:0007669"/>
    <property type="project" value="UniProtKB-UniRule"/>
</dbReference>
<dbReference type="GO" id="GO:0046872">
    <property type="term" value="F:metal ion binding"/>
    <property type="evidence" value="ECO:0007669"/>
    <property type="project" value="UniProtKB-KW"/>
</dbReference>
<dbReference type="GO" id="GO:0004550">
    <property type="term" value="F:nucleoside diphosphate kinase activity"/>
    <property type="evidence" value="ECO:0007669"/>
    <property type="project" value="UniProtKB-UniRule"/>
</dbReference>
<dbReference type="GO" id="GO:0006241">
    <property type="term" value="P:CTP biosynthetic process"/>
    <property type="evidence" value="ECO:0007669"/>
    <property type="project" value="UniProtKB-UniRule"/>
</dbReference>
<dbReference type="GO" id="GO:0006183">
    <property type="term" value="P:GTP biosynthetic process"/>
    <property type="evidence" value="ECO:0007669"/>
    <property type="project" value="UniProtKB-UniRule"/>
</dbReference>
<dbReference type="GO" id="GO:0006228">
    <property type="term" value="P:UTP biosynthetic process"/>
    <property type="evidence" value="ECO:0007669"/>
    <property type="project" value="UniProtKB-UniRule"/>
</dbReference>
<dbReference type="CDD" id="cd04413">
    <property type="entry name" value="NDPk_I"/>
    <property type="match status" value="1"/>
</dbReference>
<dbReference type="FunFam" id="3.30.70.141:FF:000003">
    <property type="entry name" value="Nucleoside diphosphate kinase"/>
    <property type="match status" value="1"/>
</dbReference>
<dbReference type="Gene3D" id="3.30.70.141">
    <property type="entry name" value="Nucleoside diphosphate kinase-like domain"/>
    <property type="match status" value="1"/>
</dbReference>
<dbReference type="HAMAP" id="MF_00451">
    <property type="entry name" value="NDP_kinase"/>
    <property type="match status" value="1"/>
</dbReference>
<dbReference type="InterPro" id="IPR034907">
    <property type="entry name" value="NDK-like_dom"/>
</dbReference>
<dbReference type="InterPro" id="IPR036850">
    <property type="entry name" value="NDK-like_dom_sf"/>
</dbReference>
<dbReference type="InterPro" id="IPR001564">
    <property type="entry name" value="Nucleoside_diP_kinase"/>
</dbReference>
<dbReference type="InterPro" id="IPR023005">
    <property type="entry name" value="Nucleoside_diP_kinase_AS"/>
</dbReference>
<dbReference type="NCBIfam" id="NF001908">
    <property type="entry name" value="PRK00668.1"/>
    <property type="match status" value="1"/>
</dbReference>
<dbReference type="PANTHER" id="PTHR46161">
    <property type="entry name" value="NUCLEOSIDE DIPHOSPHATE KINASE"/>
    <property type="match status" value="1"/>
</dbReference>
<dbReference type="PANTHER" id="PTHR46161:SF3">
    <property type="entry name" value="NUCLEOSIDE DIPHOSPHATE KINASE DDB_G0292928-RELATED"/>
    <property type="match status" value="1"/>
</dbReference>
<dbReference type="Pfam" id="PF00334">
    <property type="entry name" value="NDK"/>
    <property type="match status" value="1"/>
</dbReference>
<dbReference type="PRINTS" id="PR01243">
    <property type="entry name" value="NUCDPKINASE"/>
</dbReference>
<dbReference type="SMART" id="SM00562">
    <property type="entry name" value="NDK"/>
    <property type="match status" value="1"/>
</dbReference>
<dbReference type="SUPFAM" id="SSF54919">
    <property type="entry name" value="Nucleoside diphosphate kinase, NDK"/>
    <property type="match status" value="1"/>
</dbReference>
<dbReference type="PROSITE" id="PS00469">
    <property type="entry name" value="NDPK"/>
    <property type="match status" value="1"/>
</dbReference>
<dbReference type="PROSITE" id="PS51374">
    <property type="entry name" value="NDPK_LIKE"/>
    <property type="match status" value="1"/>
</dbReference>
<organism>
    <name type="scientific">Wolbachia sp. subsp. Drosophila simulans (strain wRi)</name>
    <dbReference type="NCBI Taxonomy" id="66084"/>
    <lineage>
        <taxon>Bacteria</taxon>
        <taxon>Pseudomonadati</taxon>
        <taxon>Pseudomonadota</taxon>
        <taxon>Alphaproteobacteria</taxon>
        <taxon>Rickettsiales</taxon>
        <taxon>Anaplasmataceae</taxon>
        <taxon>Wolbachieae</taxon>
        <taxon>Wolbachia</taxon>
    </lineage>
</organism>